<feature type="chain" id="PRO_0000165796" description="Probable cytosol aminopeptidase 1">
    <location>
        <begin position="1"/>
        <end position="500"/>
    </location>
</feature>
<feature type="active site" evidence="2">
    <location>
        <position position="275"/>
    </location>
</feature>
<feature type="active site" evidence="2">
    <location>
        <position position="350"/>
    </location>
</feature>
<feature type="binding site" evidence="1">
    <location>
        <position position="263"/>
    </location>
    <ligand>
        <name>Mn(2+)</name>
        <dbReference type="ChEBI" id="CHEBI:29035"/>
        <label>2</label>
    </ligand>
</feature>
<feature type="binding site" evidence="1">
    <location>
        <position position="268"/>
    </location>
    <ligand>
        <name>Mn(2+)</name>
        <dbReference type="ChEBI" id="CHEBI:29035"/>
        <label>1</label>
    </ligand>
</feature>
<feature type="binding site" evidence="1">
    <location>
        <position position="268"/>
    </location>
    <ligand>
        <name>Mn(2+)</name>
        <dbReference type="ChEBI" id="CHEBI:29035"/>
        <label>2</label>
    </ligand>
</feature>
<feature type="binding site" evidence="1">
    <location>
        <position position="287"/>
    </location>
    <ligand>
        <name>Mn(2+)</name>
        <dbReference type="ChEBI" id="CHEBI:29035"/>
        <label>2</label>
    </ligand>
</feature>
<feature type="binding site" evidence="1">
    <location>
        <position position="346"/>
    </location>
    <ligand>
        <name>Mn(2+)</name>
        <dbReference type="ChEBI" id="CHEBI:29035"/>
        <label>1</label>
    </ligand>
</feature>
<feature type="binding site" evidence="1">
    <location>
        <position position="348"/>
    </location>
    <ligand>
        <name>Mn(2+)</name>
        <dbReference type="ChEBI" id="CHEBI:29035"/>
        <label>1</label>
    </ligand>
</feature>
<feature type="binding site" evidence="1">
    <location>
        <position position="348"/>
    </location>
    <ligand>
        <name>Mn(2+)</name>
        <dbReference type="ChEBI" id="CHEBI:29035"/>
        <label>2</label>
    </ligand>
</feature>
<name>AMPA1_SHEON</name>
<sequence length="500" mass="53027">MALACLNSLNANAEIFSFDTRNSLNSDTLVLFHSADSTTYSLDFLPQSTQDQLNLAVADNSFSGKRGEVLEILVPSEIDAKRVLLVGIGDAKTLTPGEINALGGNIAAKLETVPQATVRVLTQGLNNAPLFGSELAHGIELRSYRYTQFKASNRVEKNYQIGVDDLSLNQKHHKNLQAVEAGVFLARDLTNAPAGNMYPESFANEARKLKSLGVKVTVLEAKDIERLNLGALAAVGKGSERPPKLVVAHWPGSKEAPIALVGKGITFDSGGYNIKATGTSIARMKSDMAGAATVLGTVKAMAIQKAPVNLVAIMPMAENMVSGHAMIPGDVITTAQGLTVEVLNTDAEGRLVLADGLWYARENYRPSVIIDVATLTGSKVSALGTVYAGLFTDSEPLVQQLTFAGQQVGEKVWRLPLDQAYDDELKSTIADLKNTGKEGSAGASAAAMFLKRFAGDQPWAHLDIAGHALTATDTAVVPAGATGYGVRLLSTWLTQPKAQN</sequence>
<accession>Q8EI85</accession>
<comment type="function">
    <text evidence="1">Presumably involved in the processing and regular turnover of intracellular proteins. Catalyzes the removal of unsubstituted N-terminal amino acids from various peptides (By similarity).</text>
</comment>
<comment type="catalytic activity">
    <reaction>
        <text>Release of an N-terminal amino acid, Xaa-|-Yaa-, in which Xaa is preferably Leu, but may be other amino acids including Pro although not Arg or Lys, and Yaa may be Pro. Amino acid amides and methyl esters are also readily hydrolyzed, but rates on arylamides are exceedingly low.</text>
        <dbReference type="EC" id="3.4.11.1"/>
    </reaction>
</comment>
<comment type="catalytic activity">
    <reaction>
        <text>Release of an N-terminal amino acid, preferentially leucine, but not glutamic or aspartic acids.</text>
        <dbReference type="EC" id="3.4.11.10"/>
    </reaction>
</comment>
<comment type="cofactor">
    <cofactor evidence="1">
        <name>Mn(2+)</name>
        <dbReference type="ChEBI" id="CHEBI:29035"/>
    </cofactor>
    <text evidence="1">Binds 2 manganese ions per subunit.</text>
</comment>
<comment type="subcellular location">
    <subcellularLocation>
        <location evidence="1">Cytoplasm</location>
    </subcellularLocation>
</comment>
<comment type="similarity">
    <text evidence="3">Belongs to the peptidase M17 family.</text>
</comment>
<comment type="sequence caution" evidence="3">
    <conflict type="erroneous initiation">
        <sequence resource="EMBL-CDS" id="AAN54033"/>
    </conflict>
</comment>
<keyword id="KW-0031">Aminopeptidase</keyword>
<keyword id="KW-0963">Cytoplasm</keyword>
<keyword id="KW-0378">Hydrolase</keyword>
<keyword id="KW-0464">Manganese</keyword>
<keyword id="KW-0479">Metal-binding</keyword>
<keyword id="KW-0645">Protease</keyword>
<keyword id="KW-1185">Reference proteome</keyword>
<evidence type="ECO:0000250" key="1"/>
<evidence type="ECO:0000255" key="2"/>
<evidence type="ECO:0000305" key="3"/>
<protein>
    <recommendedName>
        <fullName>Probable cytosol aminopeptidase 1</fullName>
        <ecNumber>3.4.11.1</ecNumber>
    </recommendedName>
    <alternativeName>
        <fullName>Leucine aminopeptidase 1</fullName>
        <shortName>LAP 1</shortName>
        <ecNumber>3.4.11.10</ecNumber>
    </alternativeName>
    <alternativeName>
        <fullName>Leucyl aminopeptidase 1</fullName>
    </alternativeName>
</protein>
<organism>
    <name type="scientific">Shewanella oneidensis (strain ATCC 700550 / JCM 31522 / CIP 106686 / LMG 19005 / NCIMB 14063 / MR-1)</name>
    <dbReference type="NCBI Taxonomy" id="211586"/>
    <lineage>
        <taxon>Bacteria</taxon>
        <taxon>Pseudomonadati</taxon>
        <taxon>Pseudomonadota</taxon>
        <taxon>Gammaproteobacteria</taxon>
        <taxon>Alteromonadales</taxon>
        <taxon>Shewanellaceae</taxon>
        <taxon>Shewanella</taxon>
    </lineage>
</organism>
<dbReference type="EC" id="3.4.11.1"/>
<dbReference type="EC" id="3.4.11.10"/>
<dbReference type="EMBL" id="AE014299">
    <property type="protein sequence ID" value="AAN54033.1"/>
    <property type="status" value="ALT_INIT"/>
    <property type="molecule type" value="Genomic_DNA"/>
</dbReference>
<dbReference type="RefSeq" id="NP_716588.1">
    <property type="nucleotide sequence ID" value="NC_004347.2"/>
</dbReference>
<dbReference type="RefSeq" id="WP_011071238.1">
    <property type="nucleotide sequence ID" value="NZ_CP053946.1"/>
</dbReference>
<dbReference type="SMR" id="Q8EI85"/>
<dbReference type="STRING" id="211586.SO_0959"/>
<dbReference type="PaxDb" id="211586-SO_0959"/>
<dbReference type="KEGG" id="son:SO_0959"/>
<dbReference type="PATRIC" id="fig|211586.12.peg.920"/>
<dbReference type="eggNOG" id="COG0260">
    <property type="taxonomic scope" value="Bacteria"/>
</dbReference>
<dbReference type="HOGENOM" id="CLU_013734_6_0_6"/>
<dbReference type="OrthoDB" id="9809354at2"/>
<dbReference type="PhylomeDB" id="Q8EI85"/>
<dbReference type="Proteomes" id="UP000008186">
    <property type="component" value="Chromosome"/>
</dbReference>
<dbReference type="GO" id="GO:0005737">
    <property type="term" value="C:cytoplasm"/>
    <property type="evidence" value="ECO:0000318"/>
    <property type="project" value="GO_Central"/>
</dbReference>
<dbReference type="GO" id="GO:0004177">
    <property type="term" value="F:aminopeptidase activity"/>
    <property type="evidence" value="ECO:0000318"/>
    <property type="project" value="GO_Central"/>
</dbReference>
<dbReference type="GO" id="GO:0030145">
    <property type="term" value="F:manganese ion binding"/>
    <property type="evidence" value="ECO:0007669"/>
    <property type="project" value="UniProtKB-UniRule"/>
</dbReference>
<dbReference type="GO" id="GO:0070006">
    <property type="term" value="F:metalloaminopeptidase activity"/>
    <property type="evidence" value="ECO:0007669"/>
    <property type="project" value="InterPro"/>
</dbReference>
<dbReference type="GO" id="GO:0006508">
    <property type="term" value="P:proteolysis"/>
    <property type="evidence" value="ECO:0000318"/>
    <property type="project" value="GO_Central"/>
</dbReference>
<dbReference type="CDD" id="cd00433">
    <property type="entry name" value="Peptidase_M17"/>
    <property type="match status" value="1"/>
</dbReference>
<dbReference type="Gene3D" id="3.40.220.10">
    <property type="entry name" value="Leucine Aminopeptidase, subunit E, domain 1"/>
    <property type="match status" value="1"/>
</dbReference>
<dbReference type="Gene3D" id="3.40.630.10">
    <property type="entry name" value="Zn peptidases"/>
    <property type="match status" value="1"/>
</dbReference>
<dbReference type="HAMAP" id="MF_00181">
    <property type="entry name" value="Cytosol_peptidase_M17"/>
    <property type="match status" value="1"/>
</dbReference>
<dbReference type="InterPro" id="IPR011356">
    <property type="entry name" value="Leucine_aapep/pepB"/>
</dbReference>
<dbReference type="InterPro" id="IPR043472">
    <property type="entry name" value="Macro_dom-like"/>
</dbReference>
<dbReference type="InterPro" id="IPR000819">
    <property type="entry name" value="Peptidase_M17_C"/>
</dbReference>
<dbReference type="InterPro" id="IPR023042">
    <property type="entry name" value="Peptidase_M17_leu_NH2_pept"/>
</dbReference>
<dbReference type="InterPro" id="IPR008283">
    <property type="entry name" value="Peptidase_M17_N"/>
</dbReference>
<dbReference type="NCBIfam" id="NF002077">
    <property type="entry name" value="PRK00913.2-4"/>
    <property type="match status" value="1"/>
</dbReference>
<dbReference type="PANTHER" id="PTHR11963:SF23">
    <property type="entry name" value="CYTOSOL AMINOPEPTIDASE"/>
    <property type="match status" value="1"/>
</dbReference>
<dbReference type="PANTHER" id="PTHR11963">
    <property type="entry name" value="LEUCINE AMINOPEPTIDASE-RELATED"/>
    <property type="match status" value="1"/>
</dbReference>
<dbReference type="Pfam" id="PF00883">
    <property type="entry name" value="Peptidase_M17"/>
    <property type="match status" value="1"/>
</dbReference>
<dbReference type="Pfam" id="PF02789">
    <property type="entry name" value="Peptidase_M17_N"/>
    <property type="match status" value="1"/>
</dbReference>
<dbReference type="PRINTS" id="PR00481">
    <property type="entry name" value="LAMNOPPTDASE"/>
</dbReference>
<dbReference type="SUPFAM" id="SSF52949">
    <property type="entry name" value="Macro domain-like"/>
    <property type="match status" value="1"/>
</dbReference>
<dbReference type="SUPFAM" id="SSF53187">
    <property type="entry name" value="Zn-dependent exopeptidases"/>
    <property type="match status" value="1"/>
</dbReference>
<dbReference type="PROSITE" id="PS00631">
    <property type="entry name" value="CYTOSOL_AP"/>
    <property type="match status" value="1"/>
</dbReference>
<gene>
    <name type="primary">pepA1</name>
    <name type="synonym">pepA-1</name>
    <name type="ordered locus">SO_0959</name>
</gene>
<proteinExistence type="inferred from homology"/>
<reference key="1">
    <citation type="journal article" date="2002" name="Nat. Biotechnol.">
        <title>Genome sequence of the dissimilatory metal ion-reducing bacterium Shewanella oneidensis.</title>
        <authorList>
            <person name="Heidelberg J.F."/>
            <person name="Paulsen I.T."/>
            <person name="Nelson K.E."/>
            <person name="Gaidos E.J."/>
            <person name="Nelson W.C."/>
            <person name="Read T.D."/>
            <person name="Eisen J.A."/>
            <person name="Seshadri R."/>
            <person name="Ward N.L."/>
            <person name="Methe B.A."/>
            <person name="Clayton R.A."/>
            <person name="Meyer T."/>
            <person name="Tsapin A."/>
            <person name="Scott J."/>
            <person name="Beanan M.J."/>
            <person name="Brinkac L.M."/>
            <person name="Daugherty S.C."/>
            <person name="DeBoy R.T."/>
            <person name="Dodson R.J."/>
            <person name="Durkin A.S."/>
            <person name="Haft D.H."/>
            <person name="Kolonay J.F."/>
            <person name="Madupu R."/>
            <person name="Peterson J.D."/>
            <person name="Umayam L.A."/>
            <person name="White O."/>
            <person name="Wolf A.M."/>
            <person name="Vamathevan J.J."/>
            <person name="Weidman J.F."/>
            <person name="Impraim M."/>
            <person name="Lee K."/>
            <person name="Berry K.J."/>
            <person name="Lee C."/>
            <person name="Mueller J."/>
            <person name="Khouri H.M."/>
            <person name="Gill J."/>
            <person name="Utterback T.R."/>
            <person name="McDonald L.A."/>
            <person name="Feldblyum T.V."/>
            <person name="Smith H.O."/>
            <person name="Venter J.C."/>
            <person name="Nealson K.H."/>
            <person name="Fraser C.M."/>
        </authorList>
    </citation>
    <scope>NUCLEOTIDE SEQUENCE [LARGE SCALE GENOMIC DNA]</scope>
    <source>
        <strain>ATCC 700550 / JCM 31522 / CIP 106686 / LMG 19005 / NCIMB 14063 / MR-1</strain>
    </source>
</reference>